<comment type="function">
    <text evidence="1">This protein is one of the early assembly proteins of the 50S ribosomal subunit, although it is not seen to bind rRNA by itself. It is important during the early stages of 50S assembly.</text>
</comment>
<comment type="subunit">
    <text evidence="1">Part of the 50S ribosomal subunit.</text>
</comment>
<comment type="similarity">
    <text evidence="1">Belongs to the universal ribosomal protein uL13 family.</text>
</comment>
<feature type="chain" id="PRO_1000144199" description="Large ribosomal subunit protein uL13">
    <location>
        <begin position="1"/>
        <end position="153"/>
    </location>
</feature>
<accession>A7INH1</accession>
<protein>
    <recommendedName>
        <fullName evidence="1">Large ribosomal subunit protein uL13</fullName>
    </recommendedName>
    <alternativeName>
        <fullName evidence="2">50S ribosomal protein L13</fullName>
    </alternativeName>
</protein>
<dbReference type="EMBL" id="CP000781">
    <property type="protein sequence ID" value="ABS69565.1"/>
    <property type="molecule type" value="Genomic_DNA"/>
</dbReference>
<dbReference type="SMR" id="A7INH1"/>
<dbReference type="STRING" id="78245.Xaut_4344"/>
<dbReference type="KEGG" id="xau:Xaut_4344"/>
<dbReference type="eggNOG" id="COG0102">
    <property type="taxonomic scope" value="Bacteria"/>
</dbReference>
<dbReference type="HOGENOM" id="CLU_082184_2_0_5"/>
<dbReference type="OrthoDB" id="9801330at2"/>
<dbReference type="PhylomeDB" id="A7INH1"/>
<dbReference type="Proteomes" id="UP000002417">
    <property type="component" value="Chromosome"/>
</dbReference>
<dbReference type="GO" id="GO:0022625">
    <property type="term" value="C:cytosolic large ribosomal subunit"/>
    <property type="evidence" value="ECO:0007669"/>
    <property type="project" value="TreeGrafter"/>
</dbReference>
<dbReference type="GO" id="GO:0003729">
    <property type="term" value="F:mRNA binding"/>
    <property type="evidence" value="ECO:0007669"/>
    <property type="project" value="TreeGrafter"/>
</dbReference>
<dbReference type="GO" id="GO:0003735">
    <property type="term" value="F:structural constituent of ribosome"/>
    <property type="evidence" value="ECO:0007669"/>
    <property type="project" value="InterPro"/>
</dbReference>
<dbReference type="GO" id="GO:0017148">
    <property type="term" value="P:negative regulation of translation"/>
    <property type="evidence" value="ECO:0007669"/>
    <property type="project" value="TreeGrafter"/>
</dbReference>
<dbReference type="GO" id="GO:0006412">
    <property type="term" value="P:translation"/>
    <property type="evidence" value="ECO:0007669"/>
    <property type="project" value="UniProtKB-UniRule"/>
</dbReference>
<dbReference type="CDD" id="cd00392">
    <property type="entry name" value="Ribosomal_L13"/>
    <property type="match status" value="1"/>
</dbReference>
<dbReference type="FunFam" id="3.90.1180.10:FF:000001">
    <property type="entry name" value="50S ribosomal protein L13"/>
    <property type="match status" value="1"/>
</dbReference>
<dbReference type="Gene3D" id="3.90.1180.10">
    <property type="entry name" value="Ribosomal protein L13"/>
    <property type="match status" value="1"/>
</dbReference>
<dbReference type="HAMAP" id="MF_01366">
    <property type="entry name" value="Ribosomal_uL13"/>
    <property type="match status" value="1"/>
</dbReference>
<dbReference type="InterPro" id="IPR005822">
    <property type="entry name" value="Ribosomal_uL13"/>
</dbReference>
<dbReference type="InterPro" id="IPR005823">
    <property type="entry name" value="Ribosomal_uL13_bac-type"/>
</dbReference>
<dbReference type="InterPro" id="IPR036899">
    <property type="entry name" value="Ribosomal_uL13_sf"/>
</dbReference>
<dbReference type="NCBIfam" id="TIGR01066">
    <property type="entry name" value="rplM_bact"/>
    <property type="match status" value="1"/>
</dbReference>
<dbReference type="PANTHER" id="PTHR11545:SF2">
    <property type="entry name" value="LARGE RIBOSOMAL SUBUNIT PROTEIN UL13M"/>
    <property type="match status" value="1"/>
</dbReference>
<dbReference type="PANTHER" id="PTHR11545">
    <property type="entry name" value="RIBOSOMAL PROTEIN L13"/>
    <property type="match status" value="1"/>
</dbReference>
<dbReference type="Pfam" id="PF00572">
    <property type="entry name" value="Ribosomal_L13"/>
    <property type="match status" value="1"/>
</dbReference>
<dbReference type="PIRSF" id="PIRSF002181">
    <property type="entry name" value="Ribosomal_L13"/>
    <property type="match status" value="1"/>
</dbReference>
<dbReference type="SUPFAM" id="SSF52161">
    <property type="entry name" value="Ribosomal protein L13"/>
    <property type="match status" value="1"/>
</dbReference>
<name>RL13_XANP2</name>
<organism>
    <name type="scientific">Xanthobacter autotrophicus (strain ATCC BAA-1158 / Py2)</name>
    <dbReference type="NCBI Taxonomy" id="78245"/>
    <lineage>
        <taxon>Bacteria</taxon>
        <taxon>Pseudomonadati</taxon>
        <taxon>Pseudomonadota</taxon>
        <taxon>Alphaproteobacteria</taxon>
        <taxon>Hyphomicrobiales</taxon>
        <taxon>Xanthobacteraceae</taxon>
        <taxon>Xanthobacter</taxon>
    </lineage>
</organism>
<evidence type="ECO:0000255" key="1">
    <source>
        <dbReference type="HAMAP-Rule" id="MF_01366"/>
    </source>
</evidence>
<evidence type="ECO:0000305" key="2"/>
<proteinExistence type="inferred from homology"/>
<reference key="1">
    <citation type="submission" date="2007-07" db="EMBL/GenBank/DDBJ databases">
        <title>Complete sequence of chromosome of Xanthobacter autotrophicus Py2.</title>
        <authorList>
            <consortium name="US DOE Joint Genome Institute"/>
            <person name="Copeland A."/>
            <person name="Lucas S."/>
            <person name="Lapidus A."/>
            <person name="Barry K."/>
            <person name="Glavina del Rio T."/>
            <person name="Hammon N."/>
            <person name="Israni S."/>
            <person name="Dalin E."/>
            <person name="Tice H."/>
            <person name="Pitluck S."/>
            <person name="Sims D."/>
            <person name="Brettin T."/>
            <person name="Bruce D."/>
            <person name="Detter J.C."/>
            <person name="Han C."/>
            <person name="Tapia R."/>
            <person name="Brainard J."/>
            <person name="Schmutz J."/>
            <person name="Larimer F."/>
            <person name="Land M."/>
            <person name="Hauser L."/>
            <person name="Kyrpides N."/>
            <person name="Kim E."/>
            <person name="Ensigns S.A."/>
            <person name="Richardson P."/>
        </authorList>
    </citation>
    <scope>NUCLEOTIDE SEQUENCE [LARGE SCALE GENOMIC DNA]</scope>
    <source>
        <strain>ATCC BAA-1158 / Py2</strain>
    </source>
</reference>
<keyword id="KW-1185">Reference proteome</keyword>
<keyword id="KW-0687">Ribonucleoprotein</keyword>
<keyword id="KW-0689">Ribosomal protein</keyword>
<sequence>MKTYSAKPAEIEKKWVVIDASGLVVGRLATIIAMRLKGKHLPIYTPHVDCGDNIVVVNAEKAVFTGRKKDQKVYYHHTGFPGGIKERTAKFVLEGRFPERVIEKAVERMLARGPLGRKIMGNLRVYKGPSHPHEAQQPVALDVAALNRKNVRN</sequence>
<gene>
    <name evidence="1" type="primary">rplM</name>
    <name type="ordered locus">Xaut_4344</name>
</gene>